<gene>
    <name evidence="1" type="primary">slmA</name>
    <name type="ordered locus">Shewmr4_3600</name>
</gene>
<keyword id="KW-0131">Cell cycle</keyword>
<keyword id="KW-0132">Cell division</keyword>
<keyword id="KW-0963">Cytoplasm</keyword>
<keyword id="KW-0238">DNA-binding</keyword>
<comment type="function">
    <text evidence="1">Required for nucleoid occlusion (NO) phenomenon, which prevents Z-ring formation and cell division over the nucleoid. Acts as a DNA-associated cell division inhibitor that binds simultaneously chromosomal DNA and FtsZ, and disrupts the assembly of FtsZ polymers. SlmA-DNA-binding sequences (SBS) are dispersed on non-Ter regions of the chromosome, preventing FtsZ polymerization at these regions.</text>
</comment>
<comment type="subunit">
    <text evidence="1">Homodimer. Interacts with FtsZ.</text>
</comment>
<comment type="subcellular location">
    <subcellularLocation>
        <location evidence="1">Cytoplasm</location>
        <location evidence="1">Nucleoid</location>
    </subcellularLocation>
</comment>
<comment type="similarity">
    <text evidence="1">Belongs to the nucleoid occlusion factor SlmA family.</text>
</comment>
<protein>
    <recommendedName>
        <fullName evidence="1">Nucleoid occlusion factor SlmA</fullName>
    </recommendedName>
</protein>
<dbReference type="EMBL" id="CP000446">
    <property type="protein sequence ID" value="ABI40664.1"/>
    <property type="molecule type" value="Genomic_DNA"/>
</dbReference>
<dbReference type="RefSeq" id="WP_011624325.1">
    <property type="nucleotide sequence ID" value="NC_008321.1"/>
</dbReference>
<dbReference type="SMR" id="Q0HE53"/>
<dbReference type="GeneID" id="94729704"/>
<dbReference type="KEGG" id="she:Shewmr4_3600"/>
<dbReference type="HOGENOM" id="CLU_069356_5_0_6"/>
<dbReference type="GO" id="GO:0043590">
    <property type="term" value="C:bacterial nucleoid"/>
    <property type="evidence" value="ECO:0007669"/>
    <property type="project" value="UniProtKB-UniRule"/>
</dbReference>
<dbReference type="GO" id="GO:0005737">
    <property type="term" value="C:cytoplasm"/>
    <property type="evidence" value="ECO:0007669"/>
    <property type="project" value="UniProtKB-UniRule"/>
</dbReference>
<dbReference type="GO" id="GO:0043565">
    <property type="term" value="F:sequence-specific DNA binding"/>
    <property type="evidence" value="ECO:0007669"/>
    <property type="project" value="UniProtKB-UniRule"/>
</dbReference>
<dbReference type="GO" id="GO:0051301">
    <property type="term" value="P:cell division"/>
    <property type="evidence" value="ECO:0007669"/>
    <property type="project" value="UniProtKB-KW"/>
</dbReference>
<dbReference type="GO" id="GO:0010974">
    <property type="term" value="P:negative regulation of division septum assembly"/>
    <property type="evidence" value="ECO:0007669"/>
    <property type="project" value="InterPro"/>
</dbReference>
<dbReference type="Gene3D" id="1.10.357.10">
    <property type="entry name" value="Tetracycline Repressor, domain 2"/>
    <property type="match status" value="1"/>
</dbReference>
<dbReference type="HAMAP" id="MF_01839">
    <property type="entry name" value="NO_factor_SlmA"/>
    <property type="match status" value="1"/>
</dbReference>
<dbReference type="InterPro" id="IPR009057">
    <property type="entry name" value="Homeodomain-like_sf"/>
</dbReference>
<dbReference type="InterPro" id="IPR050624">
    <property type="entry name" value="HTH-type_Tx_Regulator"/>
</dbReference>
<dbReference type="InterPro" id="IPR001647">
    <property type="entry name" value="HTH_TetR"/>
</dbReference>
<dbReference type="InterPro" id="IPR023769">
    <property type="entry name" value="NO_SlmA"/>
</dbReference>
<dbReference type="InterPro" id="IPR054580">
    <property type="entry name" value="SlmA-like_C"/>
</dbReference>
<dbReference type="NCBIfam" id="NF007015">
    <property type="entry name" value="PRK09480.1"/>
    <property type="match status" value="1"/>
</dbReference>
<dbReference type="PANTHER" id="PTHR43479">
    <property type="entry name" value="ACREF/ENVCD OPERON REPRESSOR-RELATED"/>
    <property type="match status" value="1"/>
</dbReference>
<dbReference type="PANTHER" id="PTHR43479:SF11">
    <property type="entry name" value="ACREF_ENVCD OPERON REPRESSOR-RELATED"/>
    <property type="match status" value="1"/>
</dbReference>
<dbReference type="Pfam" id="PF22276">
    <property type="entry name" value="SlmA-like_C"/>
    <property type="match status" value="1"/>
</dbReference>
<dbReference type="Pfam" id="PF00440">
    <property type="entry name" value="TetR_N"/>
    <property type="match status" value="1"/>
</dbReference>
<dbReference type="SUPFAM" id="SSF46689">
    <property type="entry name" value="Homeodomain-like"/>
    <property type="match status" value="1"/>
</dbReference>
<dbReference type="PROSITE" id="PS50977">
    <property type="entry name" value="HTH_TETR_2"/>
    <property type="match status" value="1"/>
</dbReference>
<evidence type="ECO:0000255" key="1">
    <source>
        <dbReference type="HAMAP-Rule" id="MF_01839"/>
    </source>
</evidence>
<sequence length="197" mass="22704">MAVSPKINRREHILQCLAQMLETSPGQRITTAKLASEVGVSEAALYRHFPSKARMFEGLIEFIEESLLSRINIIMDDEKDTMRRCQLVLQLLLIFAERNPGISRVLNGDALLGENERLRSRISTLFAKIETQLKQILREKTLREGKGFNLDEAILANLLLAFAEGRIAQFVRSEFKLKPTQHFDEQWRFIQHQLLQS</sequence>
<accession>Q0HE53</accession>
<proteinExistence type="inferred from homology"/>
<feature type="chain" id="PRO_1000070532" description="Nucleoid occlusion factor SlmA">
    <location>
        <begin position="1"/>
        <end position="197"/>
    </location>
</feature>
<feature type="domain" description="HTH tetR-type" evidence="1">
    <location>
        <begin position="7"/>
        <end position="67"/>
    </location>
</feature>
<feature type="DNA-binding region" description="H-T-H motif" evidence="1">
    <location>
        <begin position="30"/>
        <end position="49"/>
    </location>
</feature>
<reference key="1">
    <citation type="submission" date="2006-08" db="EMBL/GenBank/DDBJ databases">
        <title>Complete sequence of Shewanella sp. MR-4.</title>
        <authorList>
            <consortium name="US DOE Joint Genome Institute"/>
            <person name="Copeland A."/>
            <person name="Lucas S."/>
            <person name="Lapidus A."/>
            <person name="Barry K."/>
            <person name="Detter J.C."/>
            <person name="Glavina del Rio T."/>
            <person name="Hammon N."/>
            <person name="Israni S."/>
            <person name="Dalin E."/>
            <person name="Tice H."/>
            <person name="Pitluck S."/>
            <person name="Kiss H."/>
            <person name="Brettin T."/>
            <person name="Bruce D."/>
            <person name="Han C."/>
            <person name="Tapia R."/>
            <person name="Gilna P."/>
            <person name="Schmutz J."/>
            <person name="Larimer F."/>
            <person name="Land M."/>
            <person name="Hauser L."/>
            <person name="Kyrpides N."/>
            <person name="Mikhailova N."/>
            <person name="Nealson K."/>
            <person name="Konstantinidis K."/>
            <person name="Klappenbach J."/>
            <person name="Tiedje J."/>
            <person name="Richardson P."/>
        </authorList>
    </citation>
    <scope>NUCLEOTIDE SEQUENCE [LARGE SCALE GENOMIC DNA]</scope>
    <source>
        <strain>MR-4</strain>
    </source>
</reference>
<organism>
    <name type="scientific">Shewanella sp. (strain MR-4)</name>
    <dbReference type="NCBI Taxonomy" id="60480"/>
    <lineage>
        <taxon>Bacteria</taxon>
        <taxon>Pseudomonadati</taxon>
        <taxon>Pseudomonadota</taxon>
        <taxon>Gammaproteobacteria</taxon>
        <taxon>Alteromonadales</taxon>
        <taxon>Shewanellaceae</taxon>
        <taxon>Shewanella</taxon>
    </lineage>
</organism>
<name>SLMA_SHESM</name>